<evidence type="ECO:0000255" key="1">
    <source>
        <dbReference type="HAMAP-Rule" id="MF_01441"/>
    </source>
</evidence>
<keyword id="KW-0963">Cytoplasm</keyword>
<keyword id="KW-0226">DNA condensation</keyword>
<keyword id="KW-0238">DNA-binding</keyword>
<keyword id="KW-0408">Iron</keyword>
<keyword id="KW-0409">Iron storage</keyword>
<keyword id="KW-0479">Metal-binding</keyword>
<keyword id="KW-0560">Oxidoreductase</keyword>
<keyword id="KW-1185">Reference proteome</keyword>
<gene>
    <name evidence="1" type="primary">dps</name>
    <name type="ordered locus">ECS88_0830</name>
</gene>
<proteinExistence type="inferred from homology"/>
<organism>
    <name type="scientific">Escherichia coli O45:K1 (strain S88 / ExPEC)</name>
    <dbReference type="NCBI Taxonomy" id="585035"/>
    <lineage>
        <taxon>Bacteria</taxon>
        <taxon>Pseudomonadati</taxon>
        <taxon>Pseudomonadota</taxon>
        <taxon>Gammaproteobacteria</taxon>
        <taxon>Enterobacterales</taxon>
        <taxon>Enterobacteriaceae</taxon>
        <taxon>Escherichia</taxon>
    </lineage>
</organism>
<accession>B7MGS0</accession>
<sequence>MSTAKLVKSKATNLLYTRNDVSDSEKKATVELLNRQVIQFIDLSLITKQAHWNMRGANFIAVHEMLDGFRTALIDHLDTMAERAVQLGGVALGTTQVINSKTPLKSYPLDIHNVQDHLKELADRYAIVANDVRKAIGEAKDDDTADILTAASRDLDKFLWFIESNIE</sequence>
<name>DPS_ECO45</name>
<feature type="chain" id="PRO_1000145898" description="DNA protection during starvation protein">
    <location>
        <begin position="1"/>
        <end position="167"/>
    </location>
</feature>
<feature type="binding site" evidence="1">
    <location>
        <position position="51"/>
    </location>
    <ligand>
        <name>Fe cation</name>
        <dbReference type="ChEBI" id="CHEBI:24875"/>
        <label>1</label>
        <note>ligand shared between two neighboring subunits</note>
    </ligand>
</feature>
<feature type="binding site" description="in other chain" evidence="1">
    <location>
        <position position="78"/>
    </location>
    <ligand>
        <name>Fe cation</name>
        <dbReference type="ChEBI" id="CHEBI:24875"/>
        <label>1</label>
        <note>ligand shared between two neighboring subunits</note>
    </ligand>
</feature>
<feature type="binding site" description="in other chain" evidence="1">
    <location>
        <position position="82"/>
    </location>
    <ligand>
        <name>Fe cation</name>
        <dbReference type="ChEBI" id="CHEBI:24875"/>
        <label>1</label>
        <note>ligand shared between two neighboring subunits</note>
    </ligand>
</feature>
<feature type="binding site" evidence="1">
    <location>
        <position position="82"/>
    </location>
    <ligand>
        <name>Fe cation</name>
        <dbReference type="ChEBI" id="CHEBI:24875"/>
        <label>2</label>
    </ligand>
</feature>
<reference key="1">
    <citation type="journal article" date="2009" name="PLoS Genet.">
        <title>Organised genome dynamics in the Escherichia coli species results in highly diverse adaptive paths.</title>
        <authorList>
            <person name="Touchon M."/>
            <person name="Hoede C."/>
            <person name="Tenaillon O."/>
            <person name="Barbe V."/>
            <person name="Baeriswyl S."/>
            <person name="Bidet P."/>
            <person name="Bingen E."/>
            <person name="Bonacorsi S."/>
            <person name="Bouchier C."/>
            <person name="Bouvet O."/>
            <person name="Calteau A."/>
            <person name="Chiapello H."/>
            <person name="Clermont O."/>
            <person name="Cruveiller S."/>
            <person name="Danchin A."/>
            <person name="Diard M."/>
            <person name="Dossat C."/>
            <person name="Karoui M.E."/>
            <person name="Frapy E."/>
            <person name="Garry L."/>
            <person name="Ghigo J.M."/>
            <person name="Gilles A.M."/>
            <person name="Johnson J."/>
            <person name="Le Bouguenec C."/>
            <person name="Lescat M."/>
            <person name="Mangenot S."/>
            <person name="Martinez-Jehanne V."/>
            <person name="Matic I."/>
            <person name="Nassif X."/>
            <person name="Oztas S."/>
            <person name="Petit M.A."/>
            <person name="Pichon C."/>
            <person name="Rouy Z."/>
            <person name="Ruf C.S."/>
            <person name="Schneider D."/>
            <person name="Tourret J."/>
            <person name="Vacherie B."/>
            <person name="Vallenet D."/>
            <person name="Medigue C."/>
            <person name="Rocha E.P.C."/>
            <person name="Denamur E."/>
        </authorList>
    </citation>
    <scope>NUCLEOTIDE SEQUENCE [LARGE SCALE GENOMIC DNA]</scope>
    <source>
        <strain>S88 / ExPEC</strain>
    </source>
</reference>
<comment type="function">
    <text evidence="1">During stationary phase, binds the chromosome non-specifically, forming a highly ordered and stable dps-DNA co-crystal within which chromosomal DNA is condensed and protected from diverse damages. It protects DNA from oxidative damage by sequestering intracellular Fe(2+) ion and storing it in the form of Fe(3+) oxyhydroxide mineral, which can be released after reduction. One hydrogen peroxide oxidizes two Fe(2+) ions, which prevents hydroxyl radical production by the Fenton reaction. Dps also protects the cell from UV and gamma irradiation, iron and copper toxicity, thermal stress and acid and base shocks. Also shows a weak catalase activity.</text>
</comment>
<comment type="catalytic activity">
    <reaction evidence="1">
        <text>2 Fe(2+) + H2O2 + 2 H(+) = 2 Fe(3+) + 2 H2O</text>
        <dbReference type="Rhea" id="RHEA:48712"/>
        <dbReference type="ChEBI" id="CHEBI:15377"/>
        <dbReference type="ChEBI" id="CHEBI:15378"/>
        <dbReference type="ChEBI" id="CHEBI:16240"/>
        <dbReference type="ChEBI" id="CHEBI:29033"/>
        <dbReference type="ChEBI" id="CHEBI:29034"/>
    </reaction>
</comment>
<comment type="subunit">
    <text evidence="1">Homododecamer. The 12 subunits form a hollow sphere into which the mineral iron core of up to 500 Fe(3+) can be deposited.</text>
</comment>
<comment type="subcellular location">
    <subcellularLocation>
        <location evidence="1">Cytoplasm</location>
        <location evidence="1">Nucleoid</location>
    </subcellularLocation>
</comment>
<comment type="similarity">
    <text evidence="1">Belongs to the Dps family.</text>
</comment>
<protein>
    <recommendedName>
        <fullName evidence="1">DNA protection during starvation protein</fullName>
        <ecNumber evidence="1">1.16.-.-</ecNumber>
    </recommendedName>
</protein>
<dbReference type="EC" id="1.16.-.-" evidence="1"/>
<dbReference type="EMBL" id="CU928161">
    <property type="protein sequence ID" value="CAR02168.1"/>
    <property type="molecule type" value="Genomic_DNA"/>
</dbReference>
<dbReference type="RefSeq" id="WP_000100800.1">
    <property type="nucleotide sequence ID" value="NC_011742.1"/>
</dbReference>
<dbReference type="SMR" id="B7MGS0"/>
<dbReference type="GeneID" id="93776616"/>
<dbReference type="KEGG" id="ecz:ECS88_0830"/>
<dbReference type="HOGENOM" id="CLU_098183_1_2_6"/>
<dbReference type="Proteomes" id="UP000000747">
    <property type="component" value="Chromosome"/>
</dbReference>
<dbReference type="GO" id="GO:0005737">
    <property type="term" value="C:cytoplasm"/>
    <property type="evidence" value="ECO:0007669"/>
    <property type="project" value="UniProtKB-UniRule"/>
</dbReference>
<dbReference type="GO" id="GO:0009295">
    <property type="term" value="C:nucleoid"/>
    <property type="evidence" value="ECO:0007669"/>
    <property type="project" value="UniProtKB-SubCell"/>
</dbReference>
<dbReference type="GO" id="GO:0003677">
    <property type="term" value="F:DNA binding"/>
    <property type="evidence" value="ECO:0007669"/>
    <property type="project" value="UniProtKB-UniRule"/>
</dbReference>
<dbReference type="GO" id="GO:0008199">
    <property type="term" value="F:ferric iron binding"/>
    <property type="evidence" value="ECO:0007669"/>
    <property type="project" value="UniProtKB-UniRule"/>
</dbReference>
<dbReference type="GO" id="GO:0016722">
    <property type="term" value="F:oxidoreductase activity, acting on metal ions"/>
    <property type="evidence" value="ECO:0007669"/>
    <property type="project" value="InterPro"/>
</dbReference>
<dbReference type="GO" id="GO:0030261">
    <property type="term" value="P:chromosome condensation"/>
    <property type="evidence" value="ECO:0007669"/>
    <property type="project" value="UniProtKB-KW"/>
</dbReference>
<dbReference type="GO" id="GO:0006879">
    <property type="term" value="P:intracellular iron ion homeostasis"/>
    <property type="evidence" value="ECO:0007669"/>
    <property type="project" value="UniProtKB-KW"/>
</dbReference>
<dbReference type="CDD" id="cd01043">
    <property type="entry name" value="DPS"/>
    <property type="match status" value="1"/>
</dbReference>
<dbReference type="FunFam" id="1.20.1260.10:FF:000003">
    <property type="entry name" value="DNA protection during starvation protein"/>
    <property type="match status" value="1"/>
</dbReference>
<dbReference type="Gene3D" id="1.20.1260.10">
    <property type="match status" value="1"/>
</dbReference>
<dbReference type="HAMAP" id="MF_01441">
    <property type="entry name" value="Dps"/>
    <property type="match status" value="1"/>
</dbReference>
<dbReference type="InterPro" id="IPR002177">
    <property type="entry name" value="DPS_DNA-bd"/>
</dbReference>
<dbReference type="InterPro" id="IPR023188">
    <property type="entry name" value="DPS_DNA-bd_CS"/>
</dbReference>
<dbReference type="InterPro" id="IPR023067">
    <property type="entry name" value="Dps_gammaproteobac"/>
</dbReference>
<dbReference type="InterPro" id="IPR012347">
    <property type="entry name" value="Ferritin-like"/>
</dbReference>
<dbReference type="InterPro" id="IPR009078">
    <property type="entry name" value="Ferritin-like_SF"/>
</dbReference>
<dbReference type="InterPro" id="IPR008331">
    <property type="entry name" value="Ferritin_DPS_dom"/>
</dbReference>
<dbReference type="NCBIfam" id="NF006975">
    <property type="entry name" value="PRK09448.1"/>
    <property type="match status" value="1"/>
</dbReference>
<dbReference type="PANTHER" id="PTHR42932:SF3">
    <property type="entry name" value="DNA PROTECTION DURING STARVATION PROTEIN"/>
    <property type="match status" value="1"/>
</dbReference>
<dbReference type="PANTHER" id="PTHR42932">
    <property type="entry name" value="GENERAL STRESS PROTEIN 20U"/>
    <property type="match status" value="1"/>
</dbReference>
<dbReference type="Pfam" id="PF00210">
    <property type="entry name" value="Ferritin"/>
    <property type="match status" value="1"/>
</dbReference>
<dbReference type="PIRSF" id="PIRSF005900">
    <property type="entry name" value="Dps"/>
    <property type="match status" value="1"/>
</dbReference>
<dbReference type="PRINTS" id="PR01346">
    <property type="entry name" value="HELNAPAPROT"/>
</dbReference>
<dbReference type="SUPFAM" id="SSF47240">
    <property type="entry name" value="Ferritin-like"/>
    <property type="match status" value="1"/>
</dbReference>
<dbReference type="PROSITE" id="PS00818">
    <property type="entry name" value="DPS_1"/>
    <property type="match status" value="1"/>
</dbReference>
<dbReference type="PROSITE" id="PS00819">
    <property type="entry name" value="DPS_2"/>
    <property type="match status" value="1"/>
</dbReference>